<dbReference type="EMBL" id="AJ519809">
    <property type="protein sequence ID" value="CAD58593.1"/>
    <property type="molecule type" value="mRNA"/>
</dbReference>
<dbReference type="EMBL" id="AC006593">
    <property type="protein sequence ID" value="AAD20666.1"/>
    <property type="status" value="ALT_SEQ"/>
    <property type="molecule type" value="Genomic_DNA"/>
</dbReference>
<dbReference type="EMBL" id="CP002685">
    <property type="protein sequence ID" value="AEC08508.1"/>
    <property type="molecule type" value="Genomic_DNA"/>
</dbReference>
<dbReference type="EMBL" id="AK118441">
    <property type="protein sequence ID" value="BAC43050.1"/>
    <property type="molecule type" value="mRNA"/>
</dbReference>
<dbReference type="EMBL" id="BT009675">
    <property type="protein sequence ID" value="AAP80176.1"/>
    <property type="molecule type" value="mRNA"/>
</dbReference>
<dbReference type="PIR" id="H84717">
    <property type="entry name" value="H84717"/>
</dbReference>
<dbReference type="RefSeq" id="NP_180679.2">
    <property type="nucleotide sequence ID" value="NM_128677.2"/>
</dbReference>
<dbReference type="SMR" id="Q8GX46"/>
<dbReference type="BioGRID" id="3025">
    <property type="interactions" value="2"/>
</dbReference>
<dbReference type="FunCoup" id="Q8GX46">
    <property type="interactions" value="129"/>
</dbReference>
<dbReference type="IntAct" id="Q8GX46">
    <property type="interactions" value="3"/>
</dbReference>
<dbReference type="STRING" id="3702.Q8GX46"/>
<dbReference type="PaxDb" id="3702-AT2G31210.1"/>
<dbReference type="EnsemblPlants" id="AT2G31210.1">
    <property type="protein sequence ID" value="AT2G31210.1"/>
    <property type="gene ID" value="AT2G31210"/>
</dbReference>
<dbReference type="GeneID" id="817677"/>
<dbReference type="Gramene" id="AT2G31210.1">
    <property type="protein sequence ID" value="AT2G31210.1"/>
    <property type="gene ID" value="AT2G31210"/>
</dbReference>
<dbReference type="KEGG" id="ath:AT2G31210"/>
<dbReference type="Araport" id="AT2G31210"/>
<dbReference type="TAIR" id="AT2G31210">
    <property type="gene designation" value="BHLH091"/>
</dbReference>
<dbReference type="eggNOG" id="ENOG502QQIQ">
    <property type="taxonomic scope" value="Eukaryota"/>
</dbReference>
<dbReference type="HOGENOM" id="CLU_045325_0_0_1"/>
<dbReference type="InParanoid" id="Q8GX46"/>
<dbReference type="OMA" id="DQHYMAA"/>
<dbReference type="PhylomeDB" id="Q8GX46"/>
<dbReference type="PRO" id="PR:Q8GX46"/>
<dbReference type="Proteomes" id="UP000006548">
    <property type="component" value="Chromosome 2"/>
</dbReference>
<dbReference type="ExpressionAtlas" id="Q8GX46">
    <property type="expression patterns" value="baseline and differential"/>
</dbReference>
<dbReference type="GO" id="GO:0005634">
    <property type="term" value="C:nucleus"/>
    <property type="evidence" value="ECO:0007669"/>
    <property type="project" value="UniProtKB-SubCell"/>
</dbReference>
<dbReference type="GO" id="GO:0003677">
    <property type="term" value="F:DNA binding"/>
    <property type="evidence" value="ECO:0007669"/>
    <property type="project" value="UniProtKB-KW"/>
</dbReference>
<dbReference type="GO" id="GO:0003700">
    <property type="term" value="F:DNA-binding transcription factor activity"/>
    <property type="evidence" value="ECO:0000250"/>
    <property type="project" value="TAIR"/>
</dbReference>
<dbReference type="GO" id="GO:0046983">
    <property type="term" value="F:protein dimerization activity"/>
    <property type="evidence" value="ECO:0007669"/>
    <property type="project" value="InterPro"/>
</dbReference>
<dbReference type="GO" id="GO:0048658">
    <property type="term" value="P:anther wall tapetum development"/>
    <property type="evidence" value="ECO:0000316"/>
    <property type="project" value="TAIR"/>
</dbReference>
<dbReference type="GO" id="GO:0052543">
    <property type="term" value="P:callose deposition in cell wall"/>
    <property type="evidence" value="ECO:0000316"/>
    <property type="project" value="TAIR"/>
</dbReference>
<dbReference type="GO" id="GO:0009555">
    <property type="term" value="P:pollen development"/>
    <property type="evidence" value="ECO:0000316"/>
    <property type="project" value="TAIR"/>
</dbReference>
<dbReference type="GO" id="GO:0006355">
    <property type="term" value="P:regulation of DNA-templated transcription"/>
    <property type="evidence" value="ECO:0000270"/>
    <property type="project" value="TAIR"/>
</dbReference>
<dbReference type="CDD" id="cd18918">
    <property type="entry name" value="bHLH_AtMYC1_like"/>
    <property type="match status" value="1"/>
</dbReference>
<dbReference type="FunFam" id="4.10.280.10:FF:000118">
    <property type="entry name" value="Transcription factor bHLH10"/>
    <property type="match status" value="1"/>
</dbReference>
<dbReference type="Gene3D" id="4.10.280.10">
    <property type="entry name" value="Helix-loop-helix DNA-binding domain"/>
    <property type="match status" value="1"/>
</dbReference>
<dbReference type="InterPro" id="IPR045895">
    <property type="entry name" value="bHLH91-like"/>
</dbReference>
<dbReference type="InterPro" id="IPR011598">
    <property type="entry name" value="bHLH_dom"/>
</dbReference>
<dbReference type="InterPro" id="IPR036638">
    <property type="entry name" value="HLH_DNA-bd_sf"/>
</dbReference>
<dbReference type="InterPro" id="IPR045896">
    <property type="entry name" value="MYC1-like_bHLH"/>
</dbReference>
<dbReference type="PANTHER" id="PTHR46834:SF10">
    <property type="entry name" value="TRANSCRIPTION FACTOR BHLH138-RELATED"/>
    <property type="match status" value="1"/>
</dbReference>
<dbReference type="PANTHER" id="PTHR46834">
    <property type="entry name" value="TRANSCRIPTION FACTOR BHLH91"/>
    <property type="match status" value="1"/>
</dbReference>
<dbReference type="Pfam" id="PF00010">
    <property type="entry name" value="HLH"/>
    <property type="match status" value="1"/>
</dbReference>
<dbReference type="SMART" id="SM00353">
    <property type="entry name" value="HLH"/>
    <property type="match status" value="1"/>
</dbReference>
<dbReference type="SUPFAM" id="SSF47459">
    <property type="entry name" value="HLH, helix-loop-helix DNA-binding domain"/>
    <property type="match status" value="1"/>
</dbReference>
<dbReference type="PROSITE" id="PS50888">
    <property type="entry name" value="BHLH"/>
    <property type="match status" value="1"/>
</dbReference>
<protein>
    <recommendedName>
        <fullName>Transcription factor bHLH91</fullName>
    </recommendedName>
    <alternativeName>
        <fullName>Basic helix-loop-helix protein 91</fullName>
        <shortName>AtbHLH91</shortName>
        <shortName>bHLH 91</shortName>
    </alternativeName>
    <alternativeName>
        <fullName>Transcription factor EN 25</fullName>
    </alternativeName>
    <alternativeName>
        <fullName>bHLH transcription factor bHLH091</fullName>
    </alternativeName>
</protein>
<accession>Q8GX46</accession>
<accession>Q8GVF0</accession>
<accession>Q9SJX5</accession>
<comment type="subunit">
    <text evidence="4">Homodimer.</text>
</comment>
<comment type="subcellular location">
    <subcellularLocation>
        <location evidence="1">Nucleus</location>
    </subcellularLocation>
</comment>
<comment type="tissue specificity">
    <text evidence="3">Flowers.</text>
</comment>
<comment type="sequence caution" evidence="4">
    <conflict type="erroneous gene model prediction">
        <sequence resource="EMBL-CDS" id="AAD20666"/>
    </conflict>
</comment>
<feature type="chain" id="PRO_0000358782" description="Transcription factor bHLH91">
    <location>
        <begin position="1"/>
        <end position="428"/>
    </location>
</feature>
<feature type="domain" description="bHLH" evidence="1">
    <location>
        <begin position="210"/>
        <end position="259"/>
    </location>
</feature>
<feature type="region of interest" description="Disordered" evidence="2">
    <location>
        <begin position="278"/>
        <end position="320"/>
    </location>
</feature>
<feature type="compositionally biased region" description="Acidic residues" evidence="2">
    <location>
        <begin position="297"/>
        <end position="307"/>
    </location>
</feature>
<feature type="sequence conflict" description="In Ref. 1; CAD58593." evidence="4" ref="1">
    <original>M</original>
    <variation>T</variation>
    <location>
        <position position="420"/>
    </location>
</feature>
<sequence length="428" mass="48512">MYEESSCFDPNSMVDNNGGFCAAETTFTVSHQFQPPLGSTTNSFDDDLKLPTMDEFSVFPSVISLPNSETQNQNISNNNHLINQMIQESNWGVSEDNSNFFMNTSHPNTTTTPIPDLLSLLHLPRCSMSLPSSDIMAGSCFTYDPLFHLNLPPQPPLIPSNDYSGYLLGIDTNTTTQRDESNVGDENNNAQFDSGIIEFSKEIRRKGRGKRKNKPFTTERERRCHLNERYEALKLLIPSPSKGDRASILQDGIDYINELRRRVSELKYLVERKRCGGRHKNNEVDDNNNNKNLDDHGNEDDDDDDENMEKKPESDVIDQCSSNNSLRCSWLQRKSKVTEVDVRIVDDEVTIKVVQKKKINCLLLVSKVLDQLQLDLHHVAGGQIGEHYSFLFNTKIYEGSTIYASAIANRVIEVVDKHYMASLPNSNY</sequence>
<organism>
    <name type="scientific">Arabidopsis thaliana</name>
    <name type="common">Mouse-ear cress</name>
    <dbReference type="NCBI Taxonomy" id="3702"/>
    <lineage>
        <taxon>Eukaryota</taxon>
        <taxon>Viridiplantae</taxon>
        <taxon>Streptophyta</taxon>
        <taxon>Embryophyta</taxon>
        <taxon>Tracheophyta</taxon>
        <taxon>Spermatophyta</taxon>
        <taxon>Magnoliopsida</taxon>
        <taxon>eudicotyledons</taxon>
        <taxon>Gunneridae</taxon>
        <taxon>Pentapetalae</taxon>
        <taxon>rosids</taxon>
        <taxon>malvids</taxon>
        <taxon>Brassicales</taxon>
        <taxon>Brassicaceae</taxon>
        <taxon>Camelineae</taxon>
        <taxon>Arabidopsis</taxon>
    </lineage>
</organism>
<proteinExistence type="evidence at transcript level"/>
<name>BH091_ARATH</name>
<reference key="1">
    <citation type="journal article" date="2003" name="Mol. Biol. Evol.">
        <title>The basic helix-loop-helix transcription factor family in plants: a genome-wide study of protein structure and functional diversity.</title>
        <authorList>
            <person name="Heim M.A."/>
            <person name="Jakoby M."/>
            <person name="Werber M."/>
            <person name="Martin C."/>
            <person name="Weisshaar B."/>
            <person name="Bailey P.C."/>
        </authorList>
    </citation>
    <scope>NUCLEOTIDE SEQUENCE [MRNA]</scope>
    <scope>TISSUE SPECIFICITY</scope>
    <scope>GENE FAMILY</scope>
    <scope>NOMENCLATURE</scope>
    <source>
        <strain>cv. Columbia</strain>
        <tissue>Flower</tissue>
    </source>
</reference>
<reference key="2">
    <citation type="journal article" date="1999" name="Nature">
        <title>Sequence and analysis of chromosome 2 of the plant Arabidopsis thaliana.</title>
        <authorList>
            <person name="Lin X."/>
            <person name="Kaul S."/>
            <person name="Rounsley S.D."/>
            <person name="Shea T.P."/>
            <person name="Benito M.-I."/>
            <person name="Town C.D."/>
            <person name="Fujii C.Y."/>
            <person name="Mason T.M."/>
            <person name="Bowman C.L."/>
            <person name="Barnstead M.E."/>
            <person name="Feldblyum T.V."/>
            <person name="Buell C.R."/>
            <person name="Ketchum K.A."/>
            <person name="Lee J.J."/>
            <person name="Ronning C.M."/>
            <person name="Koo H.L."/>
            <person name="Moffat K.S."/>
            <person name="Cronin L.A."/>
            <person name="Shen M."/>
            <person name="Pai G."/>
            <person name="Van Aken S."/>
            <person name="Umayam L."/>
            <person name="Tallon L.J."/>
            <person name="Gill J.E."/>
            <person name="Adams M.D."/>
            <person name="Carrera A.J."/>
            <person name="Creasy T.H."/>
            <person name="Goodman H.M."/>
            <person name="Somerville C.R."/>
            <person name="Copenhaver G.P."/>
            <person name="Preuss D."/>
            <person name="Nierman W.C."/>
            <person name="White O."/>
            <person name="Eisen J.A."/>
            <person name="Salzberg S.L."/>
            <person name="Fraser C.M."/>
            <person name="Venter J.C."/>
        </authorList>
    </citation>
    <scope>NUCLEOTIDE SEQUENCE [LARGE SCALE GENOMIC DNA]</scope>
    <source>
        <strain>cv. Columbia</strain>
    </source>
</reference>
<reference key="3">
    <citation type="journal article" date="2017" name="Plant J.">
        <title>Araport11: a complete reannotation of the Arabidopsis thaliana reference genome.</title>
        <authorList>
            <person name="Cheng C.Y."/>
            <person name="Krishnakumar V."/>
            <person name="Chan A.P."/>
            <person name="Thibaud-Nissen F."/>
            <person name="Schobel S."/>
            <person name="Town C.D."/>
        </authorList>
    </citation>
    <scope>GENOME REANNOTATION</scope>
    <source>
        <strain>cv. Columbia</strain>
    </source>
</reference>
<reference key="4">
    <citation type="journal article" date="2002" name="Science">
        <title>Functional annotation of a full-length Arabidopsis cDNA collection.</title>
        <authorList>
            <person name="Seki M."/>
            <person name="Narusaka M."/>
            <person name="Kamiya A."/>
            <person name="Ishida J."/>
            <person name="Satou M."/>
            <person name="Sakurai T."/>
            <person name="Nakajima M."/>
            <person name="Enju A."/>
            <person name="Akiyama K."/>
            <person name="Oono Y."/>
            <person name="Muramatsu M."/>
            <person name="Hayashizaki Y."/>
            <person name="Kawai J."/>
            <person name="Carninci P."/>
            <person name="Itoh M."/>
            <person name="Ishii Y."/>
            <person name="Arakawa T."/>
            <person name="Shibata K."/>
            <person name="Shinagawa A."/>
            <person name="Shinozaki K."/>
        </authorList>
    </citation>
    <scope>NUCLEOTIDE SEQUENCE [LARGE SCALE MRNA]</scope>
    <source>
        <strain>cv. Columbia</strain>
    </source>
</reference>
<reference key="5">
    <citation type="journal article" date="2003" name="Science">
        <title>Empirical analysis of transcriptional activity in the Arabidopsis genome.</title>
        <authorList>
            <person name="Yamada K."/>
            <person name="Lim J."/>
            <person name="Dale J.M."/>
            <person name="Chen H."/>
            <person name="Shinn P."/>
            <person name="Palm C.J."/>
            <person name="Southwick A.M."/>
            <person name="Wu H.C."/>
            <person name="Kim C.J."/>
            <person name="Nguyen M."/>
            <person name="Pham P.K."/>
            <person name="Cheuk R.F."/>
            <person name="Karlin-Newmann G."/>
            <person name="Liu S.X."/>
            <person name="Lam B."/>
            <person name="Sakano H."/>
            <person name="Wu T."/>
            <person name="Yu G."/>
            <person name="Miranda M."/>
            <person name="Quach H.L."/>
            <person name="Tripp M."/>
            <person name="Chang C.H."/>
            <person name="Lee J.M."/>
            <person name="Toriumi M.J."/>
            <person name="Chan M.M."/>
            <person name="Tang C.C."/>
            <person name="Onodera C.S."/>
            <person name="Deng J.M."/>
            <person name="Akiyama K."/>
            <person name="Ansari Y."/>
            <person name="Arakawa T."/>
            <person name="Banh J."/>
            <person name="Banno F."/>
            <person name="Bowser L."/>
            <person name="Brooks S.Y."/>
            <person name="Carninci P."/>
            <person name="Chao Q."/>
            <person name="Choy N."/>
            <person name="Enju A."/>
            <person name="Goldsmith A.D."/>
            <person name="Gurjal M."/>
            <person name="Hansen N.F."/>
            <person name="Hayashizaki Y."/>
            <person name="Johnson-Hopson C."/>
            <person name="Hsuan V.W."/>
            <person name="Iida K."/>
            <person name="Karnes M."/>
            <person name="Khan S."/>
            <person name="Koesema E."/>
            <person name="Ishida J."/>
            <person name="Jiang P.X."/>
            <person name="Jones T."/>
            <person name="Kawai J."/>
            <person name="Kamiya A."/>
            <person name="Meyers C."/>
            <person name="Nakajima M."/>
            <person name="Narusaka M."/>
            <person name="Seki M."/>
            <person name="Sakurai T."/>
            <person name="Satou M."/>
            <person name="Tamse R."/>
            <person name="Vaysberg M."/>
            <person name="Wallender E.K."/>
            <person name="Wong C."/>
            <person name="Yamamura Y."/>
            <person name="Yuan S."/>
            <person name="Shinozaki K."/>
            <person name="Davis R.W."/>
            <person name="Theologis A."/>
            <person name="Ecker J.R."/>
        </authorList>
    </citation>
    <scope>NUCLEOTIDE SEQUENCE [LARGE SCALE MRNA]</scope>
    <source>
        <strain>cv. Columbia</strain>
    </source>
</reference>
<reference key="6">
    <citation type="journal article" date="2003" name="Plant Cell">
        <title>The Arabidopsis basic/helix-loop-helix transcription factor family.</title>
        <authorList>
            <person name="Toledo-Ortiz G."/>
            <person name="Huq E."/>
            <person name="Quail P.H."/>
        </authorList>
    </citation>
    <scope>GENE FAMILY</scope>
</reference>
<reference key="7">
    <citation type="journal article" date="2003" name="Plant Cell">
        <title>Update on the basic helix-loop-helix transcription factor gene family in Arabidopsis thaliana.</title>
        <authorList>
            <person name="Bailey P.C."/>
            <person name="Martin C."/>
            <person name="Toledo-Ortiz G."/>
            <person name="Quail P.H."/>
            <person name="Huq E."/>
            <person name="Heim M.A."/>
            <person name="Jakoby M."/>
            <person name="Werber M."/>
            <person name="Weisshaar B."/>
        </authorList>
    </citation>
    <scope>GENE FAMILY</scope>
    <scope>NOMENCLATURE</scope>
</reference>
<evidence type="ECO:0000255" key="1">
    <source>
        <dbReference type="PROSITE-ProRule" id="PRU00981"/>
    </source>
</evidence>
<evidence type="ECO:0000256" key="2">
    <source>
        <dbReference type="SAM" id="MobiDB-lite"/>
    </source>
</evidence>
<evidence type="ECO:0000269" key="3">
    <source>
    </source>
</evidence>
<evidence type="ECO:0000305" key="4"/>
<gene>
    <name type="primary">BHLH91</name>
    <name type="synonym">EN25</name>
    <name type="ordered locus">At2g31210</name>
    <name type="ORF">F16D14.5</name>
</gene>
<keyword id="KW-0238">DNA-binding</keyword>
<keyword id="KW-0539">Nucleus</keyword>
<keyword id="KW-1185">Reference proteome</keyword>
<keyword id="KW-0804">Transcription</keyword>
<keyword id="KW-0805">Transcription regulation</keyword>